<proteinExistence type="evidence at protein level"/>
<evidence type="ECO:0000255" key="1"/>
<evidence type="ECO:0000256" key="2">
    <source>
        <dbReference type="SAM" id="MobiDB-lite"/>
    </source>
</evidence>
<evidence type="ECO:0000269" key="3">
    <source>
    </source>
</evidence>
<evidence type="ECO:0000303" key="4">
    <source>
    </source>
</evidence>
<evidence type="ECO:0000305" key="5"/>
<evidence type="ECO:0007744" key="6">
    <source>
    </source>
</evidence>
<evidence type="ECO:0007744" key="7">
    <source>
    </source>
</evidence>
<evidence type="ECO:0007744" key="8">
    <source>
    </source>
</evidence>
<evidence type="ECO:0007744" key="9">
    <source>
    </source>
</evidence>
<evidence type="ECO:0007744" key="10">
    <source>
    </source>
</evidence>
<protein>
    <recommendedName>
        <fullName>Breast cancer metastasis-suppressor 1-like protein</fullName>
    </recommendedName>
    <alternativeName>
        <fullName>BRMS1-homolog protein p40</fullName>
    </alternativeName>
    <alternativeName>
        <fullName>BRMS1-like protein p40</fullName>
    </alternativeName>
</protein>
<gene>
    <name type="primary">BRMS1L</name>
</gene>
<accession>Q5PSV4</accession>
<accession>A6NFW5</accession>
<accession>A6NH45</accession>
<accession>B2RD65</accession>
<accession>Q9BRI4</accession>
<feature type="chain" id="PRO_0000305309" description="Breast cancer metastasis-suppressor 1-like protein">
    <location>
        <begin position="1"/>
        <end position="323"/>
    </location>
</feature>
<feature type="region of interest" description="Disordered" evidence="2">
    <location>
        <begin position="1"/>
        <end position="56"/>
    </location>
</feature>
<feature type="coiled-coil region" evidence="1">
    <location>
        <begin position="52"/>
        <end position="84"/>
    </location>
</feature>
<feature type="coiled-coil region" evidence="1">
    <location>
        <begin position="149"/>
        <end position="180"/>
    </location>
</feature>
<feature type="compositionally biased region" description="Basic and acidic residues" evidence="2">
    <location>
        <begin position="1"/>
        <end position="17"/>
    </location>
</feature>
<feature type="compositionally biased region" description="Acidic residues" evidence="2">
    <location>
        <begin position="18"/>
        <end position="53"/>
    </location>
</feature>
<feature type="modified residue" description="Phosphoserine" evidence="6">
    <location>
        <position position="197"/>
    </location>
</feature>
<feature type="cross-link" description="Glycyl lysine isopeptide (Lys-Gly) (interchain with G-Cter in SUMO2)" evidence="8 9 10">
    <location>
        <position position="240"/>
    </location>
</feature>
<feature type="cross-link" description="Glycyl lysine isopeptide (Lys-Gly) (interchain with G-Cter in SUMO2)" evidence="7 10">
    <location>
        <position position="246"/>
    </location>
</feature>
<feature type="splice variant" id="VSP_055547" description="In isoform 2." evidence="4">
    <location>
        <begin position="1"/>
        <end position="48"/>
    </location>
</feature>
<feature type="sequence conflict" description="In Ref. 1; AAV83797." evidence="5" ref="1">
    <original>V</original>
    <variation>G</variation>
    <location>
        <position position="206"/>
    </location>
</feature>
<organism>
    <name type="scientific">Homo sapiens</name>
    <name type="common">Human</name>
    <dbReference type="NCBI Taxonomy" id="9606"/>
    <lineage>
        <taxon>Eukaryota</taxon>
        <taxon>Metazoa</taxon>
        <taxon>Chordata</taxon>
        <taxon>Craniata</taxon>
        <taxon>Vertebrata</taxon>
        <taxon>Euteleostomi</taxon>
        <taxon>Mammalia</taxon>
        <taxon>Eutheria</taxon>
        <taxon>Euarchontoglires</taxon>
        <taxon>Primates</taxon>
        <taxon>Haplorrhini</taxon>
        <taxon>Catarrhini</taxon>
        <taxon>Hominidae</taxon>
        <taxon>Homo</taxon>
    </lineage>
</organism>
<reference key="1">
    <citation type="journal article" date="2004" name="Biochem. Biophys. Res. Commun.">
        <title>Identification of a novel BRMS1-homologue protein p40 as a component of the mSin3A/p33(ING1b)/HDAC1 deacetylase complex.</title>
        <authorList>
            <person name="Nikolaev A.Y."/>
            <person name="Papanikolaou N.A."/>
            <person name="Li M."/>
            <person name="Qin J."/>
            <person name="Gu W."/>
        </authorList>
    </citation>
    <scope>NUCLEOTIDE SEQUENCE [MRNA] (ISOFORM 1)</scope>
    <scope>FUNCTION</scope>
    <scope>IDENTIFICATION IN THE SIN3/HDAC1 COMPLEX</scope>
    <scope>INTERACTION WITH HDAC AND SIN3A</scope>
</reference>
<reference key="2">
    <citation type="journal article" date="2004" name="Nat. Genet.">
        <title>Complete sequencing and characterization of 21,243 full-length human cDNAs.</title>
        <authorList>
            <person name="Ota T."/>
            <person name="Suzuki Y."/>
            <person name="Nishikawa T."/>
            <person name="Otsuki T."/>
            <person name="Sugiyama T."/>
            <person name="Irie R."/>
            <person name="Wakamatsu A."/>
            <person name="Hayashi K."/>
            <person name="Sato H."/>
            <person name="Nagai K."/>
            <person name="Kimura K."/>
            <person name="Makita H."/>
            <person name="Sekine M."/>
            <person name="Obayashi M."/>
            <person name="Nishi T."/>
            <person name="Shibahara T."/>
            <person name="Tanaka T."/>
            <person name="Ishii S."/>
            <person name="Yamamoto J."/>
            <person name="Saito K."/>
            <person name="Kawai Y."/>
            <person name="Isono Y."/>
            <person name="Nakamura Y."/>
            <person name="Nagahari K."/>
            <person name="Murakami K."/>
            <person name="Yasuda T."/>
            <person name="Iwayanagi T."/>
            <person name="Wagatsuma M."/>
            <person name="Shiratori A."/>
            <person name="Sudo H."/>
            <person name="Hosoiri T."/>
            <person name="Kaku Y."/>
            <person name="Kodaira H."/>
            <person name="Kondo H."/>
            <person name="Sugawara M."/>
            <person name="Takahashi M."/>
            <person name="Kanda K."/>
            <person name="Yokoi T."/>
            <person name="Furuya T."/>
            <person name="Kikkawa E."/>
            <person name="Omura Y."/>
            <person name="Abe K."/>
            <person name="Kamihara K."/>
            <person name="Katsuta N."/>
            <person name="Sato K."/>
            <person name="Tanikawa M."/>
            <person name="Yamazaki M."/>
            <person name="Ninomiya K."/>
            <person name="Ishibashi T."/>
            <person name="Yamashita H."/>
            <person name="Murakawa K."/>
            <person name="Fujimori K."/>
            <person name="Tanai H."/>
            <person name="Kimata M."/>
            <person name="Watanabe M."/>
            <person name="Hiraoka S."/>
            <person name="Chiba Y."/>
            <person name="Ishida S."/>
            <person name="Ono Y."/>
            <person name="Takiguchi S."/>
            <person name="Watanabe S."/>
            <person name="Yosida M."/>
            <person name="Hotuta T."/>
            <person name="Kusano J."/>
            <person name="Kanehori K."/>
            <person name="Takahashi-Fujii A."/>
            <person name="Hara H."/>
            <person name="Tanase T.-O."/>
            <person name="Nomura Y."/>
            <person name="Togiya S."/>
            <person name="Komai F."/>
            <person name="Hara R."/>
            <person name="Takeuchi K."/>
            <person name="Arita M."/>
            <person name="Imose N."/>
            <person name="Musashino K."/>
            <person name="Yuuki H."/>
            <person name="Oshima A."/>
            <person name="Sasaki N."/>
            <person name="Aotsuka S."/>
            <person name="Yoshikawa Y."/>
            <person name="Matsunawa H."/>
            <person name="Ichihara T."/>
            <person name="Shiohata N."/>
            <person name="Sano S."/>
            <person name="Moriya S."/>
            <person name="Momiyama H."/>
            <person name="Satoh N."/>
            <person name="Takami S."/>
            <person name="Terashima Y."/>
            <person name="Suzuki O."/>
            <person name="Nakagawa S."/>
            <person name="Senoh A."/>
            <person name="Mizoguchi H."/>
            <person name="Goto Y."/>
            <person name="Shimizu F."/>
            <person name="Wakebe H."/>
            <person name="Hishigaki H."/>
            <person name="Watanabe T."/>
            <person name="Sugiyama A."/>
            <person name="Takemoto M."/>
            <person name="Kawakami B."/>
            <person name="Yamazaki M."/>
            <person name="Watanabe K."/>
            <person name="Kumagai A."/>
            <person name="Itakura S."/>
            <person name="Fukuzumi Y."/>
            <person name="Fujimori Y."/>
            <person name="Komiyama M."/>
            <person name="Tashiro H."/>
            <person name="Tanigami A."/>
            <person name="Fujiwara T."/>
            <person name="Ono T."/>
            <person name="Yamada K."/>
            <person name="Fujii Y."/>
            <person name="Ozaki K."/>
            <person name="Hirao M."/>
            <person name="Ohmori Y."/>
            <person name="Kawabata A."/>
            <person name="Hikiji T."/>
            <person name="Kobatake N."/>
            <person name="Inagaki H."/>
            <person name="Ikema Y."/>
            <person name="Okamoto S."/>
            <person name="Okitani R."/>
            <person name="Kawakami T."/>
            <person name="Noguchi S."/>
            <person name="Itoh T."/>
            <person name="Shigeta K."/>
            <person name="Senba T."/>
            <person name="Matsumura K."/>
            <person name="Nakajima Y."/>
            <person name="Mizuno T."/>
            <person name="Morinaga M."/>
            <person name="Sasaki M."/>
            <person name="Togashi T."/>
            <person name="Oyama M."/>
            <person name="Hata H."/>
            <person name="Watanabe M."/>
            <person name="Komatsu T."/>
            <person name="Mizushima-Sugano J."/>
            <person name="Satoh T."/>
            <person name="Shirai Y."/>
            <person name="Takahashi Y."/>
            <person name="Nakagawa K."/>
            <person name="Okumura K."/>
            <person name="Nagase T."/>
            <person name="Nomura N."/>
            <person name="Kikuchi H."/>
            <person name="Masuho Y."/>
            <person name="Yamashita R."/>
            <person name="Nakai K."/>
            <person name="Yada T."/>
            <person name="Nakamura Y."/>
            <person name="Ohara O."/>
            <person name="Isogai T."/>
            <person name="Sugano S."/>
        </authorList>
    </citation>
    <scope>NUCLEOTIDE SEQUENCE [LARGE SCALE MRNA] (ISOFORM 2)</scope>
</reference>
<reference key="3">
    <citation type="journal article" date="2003" name="Nature">
        <title>The DNA sequence and analysis of human chromosome 14.</title>
        <authorList>
            <person name="Heilig R."/>
            <person name="Eckenberg R."/>
            <person name="Petit J.-L."/>
            <person name="Fonknechten N."/>
            <person name="Da Silva C."/>
            <person name="Cattolico L."/>
            <person name="Levy M."/>
            <person name="Barbe V."/>
            <person name="De Berardinis V."/>
            <person name="Ureta-Vidal A."/>
            <person name="Pelletier E."/>
            <person name="Vico V."/>
            <person name="Anthouard V."/>
            <person name="Rowen L."/>
            <person name="Madan A."/>
            <person name="Qin S."/>
            <person name="Sun H."/>
            <person name="Du H."/>
            <person name="Pepin K."/>
            <person name="Artiguenave F."/>
            <person name="Robert C."/>
            <person name="Cruaud C."/>
            <person name="Bruels T."/>
            <person name="Jaillon O."/>
            <person name="Friedlander L."/>
            <person name="Samson G."/>
            <person name="Brottier P."/>
            <person name="Cure S."/>
            <person name="Segurens B."/>
            <person name="Aniere F."/>
            <person name="Samain S."/>
            <person name="Crespeau H."/>
            <person name="Abbasi N."/>
            <person name="Aiach N."/>
            <person name="Boscus D."/>
            <person name="Dickhoff R."/>
            <person name="Dors M."/>
            <person name="Dubois I."/>
            <person name="Friedman C."/>
            <person name="Gouyvenoux M."/>
            <person name="James R."/>
            <person name="Madan A."/>
            <person name="Mairey-Estrada B."/>
            <person name="Mangenot S."/>
            <person name="Martins N."/>
            <person name="Menard M."/>
            <person name="Oztas S."/>
            <person name="Ratcliffe A."/>
            <person name="Shaffer T."/>
            <person name="Trask B."/>
            <person name="Vacherie B."/>
            <person name="Bellemere C."/>
            <person name="Belser C."/>
            <person name="Besnard-Gonnet M."/>
            <person name="Bartol-Mavel D."/>
            <person name="Boutard M."/>
            <person name="Briez-Silla S."/>
            <person name="Combette S."/>
            <person name="Dufosse-Laurent V."/>
            <person name="Ferron C."/>
            <person name="Lechaplais C."/>
            <person name="Louesse C."/>
            <person name="Muselet D."/>
            <person name="Magdelenat G."/>
            <person name="Pateau E."/>
            <person name="Petit E."/>
            <person name="Sirvain-Trukniewicz P."/>
            <person name="Trybou A."/>
            <person name="Vega-Czarny N."/>
            <person name="Bataille E."/>
            <person name="Bluet E."/>
            <person name="Bordelais I."/>
            <person name="Dubois M."/>
            <person name="Dumont C."/>
            <person name="Guerin T."/>
            <person name="Haffray S."/>
            <person name="Hammadi R."/>
            <person name="Muanga J."/>
            <person name="Pellouin V."/>
            <person name="Robert D."/>
            <person name="Wunderle E."/>
            <person name="Gauguet G."/>
            <person name="Roy A."/>
            <person name="Sainte-Marthe L."/>
            <person name="Verdier J."/>
            <person name="Verdier-Discala C."/>
            <person name="Hillier L.W."/>
            <person name="Fulton L."/>
            <person name="McPherson J."/>
            <person name="Matsuda F."/>
            <person name="Wilson R."/>
            <person name="Scarpelli C."/>
            <person name="Gyapay G."/>
            <person name="Wincker P."/>
            <person name="Saurin W."/>
            <person name="Quetier F."/>
            <person name="Waterston R."/>
            <person name="Hood L."/>
            <person name="Weissenbach J."/>
        </authorList>
    </citation>
    <scope>NUCLEOTIDE SEQUENCE [LARGE SCALE GENOMIC DNA]</scope>
</reference>
<reference key="4">
    <citation type="journal article" date="2004" name="Genome Res.">
        <title>The status, quality, and expansion of the NIH full-length cDNA project: the Mammalian Gene Collection (MGC).</title>
        <authorList>
            <consortium name="The MGC Project Team"/>
        </authorList>
    </citation>
    <scope>NUCLEOTIDE SEQUENCE [LARGE SCALE MRNA] (ISOFORM 1)</scope>
    <source>
        <tissue>Ovary</tissue>
    </source>
</reference>
<reference key="5">
    <citation type="journal article" date="2013" name="J. Proteome Res.">
        <title>Toward a comprehensive characterization of a human cancer cell phosphoproteome.</title>
        <authorList>
            <person name="Zhou H."/>
            <person name="Di Palma S."/>
            <person name="Preisinger C."/>
            <person name="Peng M."/>
            <person name="Polat A.N."/>
            <person name="Heck A.J."/>
            <person name="Mohammed S."/>
        </authorList>
    </citation>
    <scope>PHOSPHORYLATION [LARGE SCALE ANALYSIS] AT SER-197</scope>
    <scope>IDENTIFICATION BY MASS SPECTROMETRY [LARGE SCALE ANALYSIS]</scope>
    <source>
        <tissue>Cervix carcinoma</tissue>
    </source>
</reference>
<reference key="6">
    <citation type="journal article" date="2014" name="Proc. Natl. Acad. Sci. U.S.A.">
        <title>Mapping of SUMO sites and analysis of SUMOylation changes induced by external stimuli.</title>
        <authorList>
            <person name="Impens F."/>
            <person name="Radoshevich L."/>
            <person name="Cossart P."/>
            <person name="Ribet D."/>
        </authorList>
    </citation>
    <scope>SUMOYLATION [LARGE SCALE ANALYSIS] AT LYS-246</scope>
    <scope>IDENTIFICATION BY MASS SPECTROMETRY [LARGE SCALE ANALYSIS]</scope>
</reference>
<reference key="7">
    <citation type="journal article" date="2015" name="Cell Rep.">
        <title>SUMO-2 orchestrates chromatin modifiers in response to DNA damage.</title>
        <authorList>
            <person name="Hendriks I.A."/>
            <person name="Treffers L.W."/>
            <person name="Verlaan-de Vries M."/>
            <person name="Olsen J.V."/>
            <person name="Vertegaal A.C."/>
        </authorList>
    </citation>
    <scope>SUMOYLATION [LARGE SCALE ANALYSIS] AT LYS-240</scope>
    <scope>IDENTIFICATION BY MASS SPECTROMETRY [LARGE SCALE ANALYSIS]</scope>
</reference>
<reference key="8">
    <citation type="journal article" date="2015" name="Mol. Cell. Proteomics">
        <title>System-wide analysis of SUMOylation dynamics in response to replication stress reveals novel small ubiquitin-like modified target proteins and acceptor lysines relevant for genome stability.</title>
        <authorList>
            <person name="Xiao Z."/>
            <person name="Chang J.G."/>
            <person name="Hendriks I.A."/>
            <person name="Sigurdsson J.O."/>
            <person name="Olsen J.V."/>
            <person name="Vertegaal A.C."/>
        </authorList>
    </citation>
    <scope>SUMOYLATION [LARGE SCALE ANALYSIS] AT LYS-240</scope>
    <scope>IDENTIFICATION BY MASS SPECTROMETRY [LARGE SCALE ANALYSIS]</scope>
</reference>
<reference key="9">
    <citation type="journal article" date="2017" name="Nat. Struct. Mol. Biol.">
        <title>Site-specific mapping of the human SUMO proteome reveals co-modification with phosphorylation.</title>
        <authorList>
            <person name="Hendriks I.A."/>
            <person name="Lyon D."/>
            <person name="Young C."/>
            <person name="Jensen L.J."/>
            <person name="Vertegaal A.C."/>
            <person name="Nielsen M.L."/>
        </authorList>
    </citation>
    <scope>SUMOYLATION [LARGE SCALE ANALYSIS] AT LYS-240 AND LYS-246</scope>
    <scope>IDENTIFICATION BY MASS SPECTROMETRY [LARGE SCALE ANALYSIS]</scope>
</reference>
<dbReference type="EMBL" id="AY827074">
    <property type="protein sequence ID" value="AAV83797.1"/>
    <property type="molecule type" value="mRNA"/>
</dbReference>
<dbReference type="EMBL" id="AK315424">
    <property type="protein sequence ID" value="BAG37812.1"/>
    <property type="molecule type" value="mRNA"/>
</dbReference>
<dbReference type="EMBL" id="AL162311">
    <property type="status" value="NOT_ANNOTATED_CDS"/>
    <property type="molecule type" value="Genomic_DNA"/>
</dbReference>
<dbReference type="EMBL" id="BC006250">
    <property type="protein sequence ID" value="AAH06250.2"/>
    <property type="molecule type" value="mRNA"/>
</dbReference>
<dbReference type="CCDS" id="CCDS32066.1">
    <molecule id="Q5PSV4-1"/>
</dbReference>
<dbReference type="RefSeq" id="NP_115728.2">
    <molecule id="Q5PSV4-1"/>
    <property type="nucleotide sequence ID" value="NM_032352.3"/>
</dbReference>
<dbReference type="RefSeq" id="XP_006720338.1">
    <property type="nucleotide sequence ID" value="XM_006720275.2"/>
</dbReference>
<dbReference type="RefSeq" id="XP_016877193.1">
    <property type="nucleotide sequence ID" value="XM_017021704.1"/>
</dbReference>
<dbReference type="RefSeq" id="XP_016877194.1">
    <molecule id="Q5PSV4-2"/>
    <property type="nucleotide sequence ID" value="XM_017021705.1"/>
</dbReference>
<dbReference type="RefSeq" id="XP_054232786.1">
    <molecule id="Q5PSV4-2"/>
    <property type="nucleotide sequence ID" value="XM_054376811.1"/>
</dbReference>
<dbReference type="SMR" id="Q5PSV4"/>
<dbReference type="BioGRID" id="124038">
    <property type="interactions" value="132"/>
</dbReference>
<dbReference type="ComplexPortal" id="CPX-3321">
    <property type="entry name" value="SIN3A histone deacetylase complex"/>
</dbReference>
<dbReference type="ComplexPortal" id="CPX-3322">
    <property type="entry name" value="SIN3B histone deacetylase complex"/>
</dbReference>
<dbReference type="ComplexPortal" id="CPX-3323">
    <property type="entry name" value="SIN3A histone deacetylase complex, ES cell-specific variant"/>
</dbReference>
<dbReference type="CORUM" id="Q5PSV4"/>
<dbReference type="FunCoup" id="Q5PSV4">
    <property type="interactions" value="2279"/>
</dbReference>
<dbReference type="IntAct" id="Q5PSV4">
    <property type="interactions" value="76"/>
</dbReference>
<dbReference type="MINT" id="Q5PSV4"/>
<dbReference type="STRING" id="9606.ENSP00000216807"/>
<dbReference type="GlyGen" id="Q5PSV4">
    <property type="glycosylation" value="1 site, 1 O-linked glycan (1 site)"/>
</dbReference>
<dbReference type="iPTMnet" id="Q5PSV4"/>
<dbReference type="PhosphoSitePlus" id="Q5PSV4"/>
<dbReference type="BioMuta" id="BRMS1L"/>
<dbReference type="DMDM" id="158706476"/>
<dbReference type="jPOST" id="Q5PSV4"/>
<dbReference type="MassIVE" id="Q5PSV4"/>
<dbReference type="PaxDb" id="9606-ENSP00000216807"/>
<dbReference type="PeptideAtlas" id="Q5PSV4"/>
<dbReference type="ProteomicsDB" id="3426"/>
<dbReference type="ProteomicsDB" id="63603">
    <molecule id="Q5PSV4-1"/>
</dbReference>
<dbReference type="Pumba" id="Q5PSV4"/>
<dbReference type="Antibodypedia" id="23255">
    <property type="antibodies" value="119 antibodies from 20 providers"/>
</dbReference>
<dbReference type="DNASU" id="84312"/>
<dbReference type="Ensembl" id="ENST00000216807.12">
    <molecule id="Q5PSV4-1"/>
    <property type="protein sequence ID" value="ENSP00000216807.6"/>
    <property type="gene ID" value="ENSG00000100916.14"/>
</dbReference>
<dbReference type="GeneID" id="84312"/>
<dbReference type="KEGG" id="hsa:84312"/>
<dbReference type="MANE-Select" id="ENST00000216807.12">
    <property type="protein sequence ID" value="ENSP00000216807.6"/>
    <property type="RefSeq nucleotide sequence ID" value="NM_032352.4"/>
    <property type="RefSeq protein sequence ID" value="NP_115728.2"/>
</dbReference>
<dbReference type="UCSC" id="uc001wtl.4">
    <molecule id="Q5PSV4-1"/>
    <property type="organism name" value="human"/>
</dbReference>
<dbReference type="AGR" id="HGNC:20512"/>
<dbReference type="CTD" id="84312"/>
<dbReference type="DisGeNET" id="84312"/>
<dbReference type="GeneCards" id="BRMS1L"/>
<dbReference type="HGNC" id="HGNC:20512">
    <property type="gene designation" value="BRMS1L"/>
</dbReference>
<dbReference type="HPA" id="ENSG00000100916">
    <property type="expression patterns" value="Low tissue specificity"/>
</dbReference>
<dbReference type="MIM" id="618514">
    <property type="type" value="gene"/>
</dbReference>
<dbReference type="neXtProt" id="NX_Q5PSV4"/>
<dbReference type="OpenTargets" id="ENSG00000100916"/>
<dbReference type="PharmGKB" id="PA134968356"/>
<dbReference type="VEuPathDB" id="HostDB:ENSG00000100916"/>
<dbReference type="eggNOG" id="KOG4466">
    <property type="taxonomic scope" value="Eukaryota"/>
</dbReference>
<dbReference type="GeneTree" id="ENSGT00940000158921"/>
<dbReference type="HOGENOM" id="CLU_050862_2_0_1"/>
<dbReference type="InParanoid" id="Q5PSV4"/>
<dbReference type="OMA" id="XIYRELC"/>
<dbReference type="OrthoDB" id="20886at2759"/>
<dbReference type="PAN-GO" id="Q5PSV4">
    <property type="GO annotations" value="4 GO annotations based on evolutionary models"/>
</dbReference>
<dbReference type="PhylomeDB" id="Q5PSV4"/>
<dbReference type="TreeFam" id="TF323740"/>
<dbReference type="PathwayCommons" id="Q5PSV4"/>
<dbReference type="SignaLink" id="Q5PSV4"/>
<dbReference type="BioGRID-ORCS" id="84312">
    <property type="hits" value="19 hits in 1159 CRISPR screens"/>
</dbReference>
<dbReference type="ChiTaRS" id="BRMS1L">
    <property type="organism name" value="human"/>
</dbReference>
<dbReference type="GenomeRNAi" id="84312"/>
<dbReference type="Pharos" id="Q5PSV4">
    <property type="development level" value="Tbio"/>
</dbReference>
<dbReference type="PRO" id="PR:Q5PSV4"/>
<dbReference type="Proteomes" id="UP000005640">
    <property type="component" value="Chromosome 14"/>
</dbReference>
<dbReference type="RNAct" id="Q5PSV4">
    <property type="molecule type" value="protein"/>
</dbReference>
<dbReference type="Bgee" id="ENSG00000100916">
    <property type="expression patterns" value="Expressed in left ventricle myocardium and 186 other cell types or tissues"/>
</dbReference>
<dbReference type="ExpressionAtlas" id="Q5PSV4">
    <property type="expression patterns" value="baseline and differential"/>
</dbReference>
<dbReference type="GO" id="GO:0005634">
    <property type="term" value="C:nucleus"/>
    <property type="evidence" value="ECO:0000303"/>
    <property type="project" value="ComplexPortal"/>
</dbReference>
<dbReference type="GO" id="GO:0070822">
    <property type="term" value="C:Sin3-type complex"/>
    <property type="evidence" value="ECO:0000318"/>
    <property type="project" value="GO_Central"/>
</dbReference>
<dbReference type="GO" id="GO:0042826">
    <property type="term" value="F:histone deacetylase binding"/>
    <property type="evidence" value="ECO:0000318"/>
    <property type="project" value="GO_Central"/>
</dbReference>
<dbReference type="GO" id="GO:0030336">
    <property type="term" value="P:negative regulation of cell migration"/>
    <property type="evidence" value="ECO:0000303"/>
    <property type="project" value="ComplexPortal"/>
</dbReference>
<dbReference type="GO" id="GO:1902455">
    <property type="term" value="P:negative regulation of stem cell population maintenance"/>
    <property type="evidence" value="ECO:0000303"/>
    <property type="project" value="ComplexPortal"/>
</dbReference>
<dbReference type="GO" id="GO:0000122">
    <property type="term" value="P:negative regulation of transcription by RNA polymerase II"/>
    <property type="evidence" value="ECO:0000318"/>
    <property type="project" value="GO_Central"/>
</dbReference>
<dbReference type="GO" id="GO:0030512">
    <property type="term" value="P:negative regulation of transforming growth factor beta receptor signaling pathway"/>
    <property type="evidence" value="ECO:0000303"/>
    <property type="project" value="ComplexPortal"/>
</dbReference>
<dbReference type="GO" id="GO:1902459">
    <property type="term" value="P:positive regulation of stem cell population maintenance"/>
    <property type="evidence" value="ECO:0000303"/>
    <property type="project" value="ComplexPortal"/>
</dbReference>
<dbReference type="FunFam" id="1.20.5.1500:FF:000002">
    <property type="entry name" value="breast cancer metastasis-suppressor 1-like protein-A"/>
    <property type="match status" value="1"/>
</dbReference>
<dbReference type="Gene3D" id="1.20.5.1500">
    <property type="match status" value="1"/>
</dbReference>
<dbReference type="InterPro" id="IPR013907">
    <property type="entry name" value="Sds3"/>
</dbReference>
<dbReference type="PANTHER" id="PTHR21964">
    <property type="entry name" value="BREAST CANCER METASTASIS-SUPPRESSOR 1"/>
    <property type="match status" value="1"/>
</dbReference>
<dbReference type="Pfam" id="PF08598">
    <property type="entry name" value="Sds3"/>
    <property type="match status" value="1"/>
</dbReference>
<dbReference type="SMART" id="SM01401">
    <property type="entry name" value="Sds3"/>
    <property type="match status" value="1"/>
</dbReference>
<name>BRM1L_HUMAN</name>
<sequence length="323" mass="37629">MPVHSRGDKKETNHHDEMEVDYAENEGSSSEDEDTESSSVSEDGDSSEMDDEDCERRRMECLDEMSNLEKQFTDLKDQLYKERLSQVDAKLQEVIAGKAPEYLEPLATLQENMQIRTKVAGIYRELCLESVKNKYECEIQASRQHCESEKLLLYDTVQSELEEKIRRLEEDRHSIDITSELWNDELQSRKKRKDPFSPDKKKPVVVSGPYIVYMLQDLDILEDWTTIRKAMATLGPHRVKTEPPVKLEKHLHSARSEEGRLYYDGEWYIRGQTICIDKKDECPTSAVITTINHDEVWFKRPDGSKSKLYISQLQKGKYSIKHS</sequence>
<comment type="function">
    <text evidence="3">Involved in the histone deacetylase (HDAC1)-dependent transcriptional repression activity. When overexpressed in lung cancer cell line that lacks p53/TP53 expression, inhibits cell growth.</text>
</comment>
<comment type="subunit">
    <text evidence="3">Component of the Sin3/HDAC1 corepressor complex at least composed of BRMS1, BRMS1L and ING2/ING1L. Interacts with HDAC and SIN3A.</text>
</comment>
<comment type="interaction">
    <interactant intactId="EBI-5666615">
        <id>Q5PSV4</id>
    </interactant>
    <interactant intactId="EBI-77797">
        <id>P35609</id>
        <label>ACTN2</label>
    </interactant>
    <organismsDiffer>false</organismsDiffer>
    <experiments>7</experiments>
</comment>
<comment type="interaction">
    <interactant intactId="EBI-5666615">
        <id>Q5PSV4</id>
    </interactant>
    <interactant intactId="EBI-746752">
        <id>Q9Y2J4</id>
        <label>AMOTL2</label>
    </interactant>
    <organismsDiffer>false</organismsDiffer>
    <experiments>3</experiments>
</comment>
<comment type="interaction">
    <interactant intactId="EBI-5666615">
        <id>Q5PSV4</id>
    </interactant>
    <interactant intactId="EBI-10187270">
        <id>Q9Y2J4-4</id>
        <label>AMOTL2</label>
    </interactant>
    <organismsDiffer>false</organismsDiffer>
    <experiments>3</experiments>
</comment>
<comment type="interaction">
    <interactant intactId="EBI-5666615">
        <id>Q5PSV4</id>
    </interactant>
    <interactant intactId="EBI-739624">
        <id>Q8NHQ1</id>
        <label>CEP70</label>
    </interactant>
    <organismsDiffer>false</organismsDiffer>
    <experiments>3</experiments>
</comment>
<comment type="interaction">
    <interactant intactId="EBI-5666615">
        <id>Q5PSV4</id>
    </interactant>
    <interactant intactId="EBI-748597">
        <id>Q05D60</id>
        <label>DEUP1</label>
    </interactant>
    <organismsDiffer>false</organismsDiffer>
    <experiments>3</experiments>
</comment>
<comment type="interaction">
    <interactant intactId="EBI-5666615">
        <id>Q5PSV4</id>
    </interactant>
    <interactant intactId="EBI-949824">
        <id>O00471</id>
        <label>EXOC5</label>
    </interactant>
    <organismsDiffer>false</organismsDiffer>
    <experiments>3</experiments>
</comment>
<comment type="interaction">
    <interactant intactId="EBI-5666615">
        <id>Q5PSV4</id>
    </interactant>
    <interactant intactId="EBI-348399">
        <id>P22607</id>
        <label>FGFR3</label>
    </interactant>
    <organismsDiffer>false</organismsDiffer>
    <experiments>3</experiments>
</comment>
<comment type="interaction">
    <interactant intactId="EBI-5666615">
        <id>Q5PSV4</id>
    </interactant>
    <interactant intactId="EBI-8285963">
        <id>Q14957</id>
        <label>GRIN2C</label>
    </interactant>
    <organismsDiffer>false</organismsDiffer>
    <experiments>3</experiments>
</comment>
<comment type="interaction">
    <interactant intactId="EBI-5666615">
        <id>Q5PSV4</id>
    </interactant>
    <interactant intactId="EBI-350145">
        <id>P01112</id>
        <label>HRAS</label>
    </interactant>
    <organismsDiffer>false</organismsDiffer>
    <experiments>3</experiments>
</comment>
<comment type="interaction">
    <interactant intactId="EBI-5666615">
        <id>Q5PSV4</id>
    </interactant>
    <interactant intactId="EBI-348259">
        <id>Q96EZ8</id>
        <label>MCRS1</label>
    </interactant>
    <organismsDiffer>false</organismsDiffer>
    <experiments>5</experiments>
</comment>
<comment type="interaction">
    <interactant intactId="EBI-5666615">
        <id>Q5PSV4</id>
    </interactant>
    <interactant intactId="EBI-10172526">
        <id>Q9UJV3-2</id>
        <label>MID2</label>
    </interactant>
    <organismsDiffer>false</organismsDiffer>
    <experiments>3</experiments>
</comment>
<comment type="interaction">
    <interactant intactId="EBI-5666615">
        <id>Q5PSV4</id>
    </interactant>
    <interactant intactId="EBI-301611">
        <id>P40424</id>
        <label>PBX1</label>
    </interactant>
    <organismsDiffer>false</organismsDiffer>
    <experiments>3</experiments>
</comment>
<comment type="interaction">
    <interactant intactId="EBI-5666615">
        <id>Q5PSV4</id>
    </interactant>
    <interactant intactId="EBI-348489">
        <id>P40425</id>
        <label>PBX2</label>
    </interactant>
    <organismsDiffer>false</organismsDiffer>
    <experiments>3</experiments>
</comment>
<comment type="interaction">
    <interactant intactId="EBI-5666615">
        <id>Q5PSV4</id>
    </interactant>
    <interactant intactId="EBI-11523345">
        <id>Q8IYF3-3</id>
        <label>TEX11</label>
    </interactant>
    <organismsDiffer>false</organismsDiffer>
    <experiments>3</experiments>
</comment>
<comment type="interaction">
    <interactant intactId="EBI-5666615">
        <id>Q5PSV4</id>
    </interactant>
    <interactant intactId="EBI-359793">
        <id>P40222</id>
        <label>TXLNA</label>
    </interactant>
    <organismsDiffer>false</organismsDiffer>
    <experiments>3</experiments>
</comment>
<comment type="subcellular location">
    <subcellularLocation>
        <location evidence="5">Nucleus</location>
    </subcellularLocation>
</comment>
<comment type="alternative products">
    <event type="alternative splicing"/>
    <isoform>
        <id>Q5PSV4-1</id>
        <name>1</name>
        <sequence type="displayed"/>
    </isoform>
    <isoform>
        <id>Q5PSV4-2</id>
        <name>2</name>
        <sequence type="described" ref="VSP_055547"/>
    </isoform>
</comment>
<comment type="similarity">
    <text evidence="5">Belongs to the BRMS1 family.</text>
</comment>
<keyword id="KW-0025">Alternative splicing</keyword>
<keyword id="KW-0175">Coiled coil</keyword>
<keyword id="KW-0341">Growth regulation</keyword>
<keyword id="KW-1017">Isopeptide bond</keyword>
<keyword id="KW-0539">Nucleus</keyword>
<keyword id="KW-0597">Phosphoprotein</keyword>
<keyword id="KW-1267">Proteomics identification</keyword>
<keyword id="KW-1185">Reference proteome</keyword>
<keyword id="KW-0678">Repressor</keyword>
<keyword id="KW-0804">Transcription</keyword>
<keyword id="KW-0805">Transcription regulation</keyword>
<keyword id="KW-0832">Ubl conjugation</keyword>